<protein>
    <recommendedName>
        <fullName evidence="1">S-adenosylmethionine:tRNA ribosyltransferase-isomerase</fullName>
        <ecNumber evidence="1">2.4.99.17</ecNumber>
    </recommendedName>
    <alternativeName>
        <fullName evidence="1">Queuosine biosynthesis protein QueA</fullName>
    </alternativeName>
</protein>
<name>QUEA_TRIL1</name>
<organism>
    <name type="scientific">Trichlorobacter lovleyi (strain ATCC BAA-1151 / DSM 17278 / SZ)</name>
    <name type="common">Geobacter lovleyi</name>
    <dbReference type="NCBI Taxonomy" id="398767"/>
    <lineage>
        <taxon>Bacteria</taxon>
        <taxon>Pseudomonadati</taxon>
        <taxon>Thermodesulfobacteriota</taxon>
        <taxon>Desulfuromonadia</taxon>
        <taxon>Geobacterales</taxon>
        <taxon>Geobacteraceae</taxon>
        <taxon>Trichlorobacter</taxon>
    </lineage>
</organism>
<feature type="chain" id="PRO_1000094780" description="S-adenosylmethionine:tRNA ribosyltransferase-isomerase">
    <location>
        <begin position="1"/>
        <end position="341"/>
    </location>
</feature>
<reference key="1">
    <citation type="submission" date="2008-05" db="EMBL/GenBank/DDBJ databases">
        <title>Complete sequence of chromosome of Geobacter lovleyi SZ.</title>
        <authorList>
            <consortium name="US DOE Joint Genome Institute"/>
            <person name="Lucas S."/>
            <person name="Copeland A."/>
            <person name="Lapidus A."/>
            <person name="Glavina del Rio T."/>
            <person name="Dalin E."/>
            <person name="Tice H."/>
            <person name="Bruce D."/>
            <person name="Goodwin L."/>
            <person name="Pitluck S."/>
            <person name="Chertkov O."/>
            <person name="Meincke L."/>
            <person name="Brettin T."/>
            <person name="Detter J.C."/>
            <person name="Han C."/>
            <person name="Tapia R."/>
            <person name="Kuske C.R."/>
            <person name="Schmutz J."/>
            <person name="Larimer F."/>
            <person name="Land M."/>
            <person name="Hauser L."/>
            <person name="Kyrpides N."/>
            <person name="Mikhailova N."/>
            <person name="Sung Y."/>
            <person name="Fletcher K.E."/>
            <person name="Ritalahti K.M."/>
            <person name="Loeffler F.E."/>
            <person name="Richardson P."/>
        </authorList>
    </citation>
    <scope>NUCLEOTIDE SEQUENCE [LARGE SCALE GENOMIC DNA]</scope>
    <source>
        <strain>ATCC BAA-1151 / DSM 17278 / SZ</strain>
    </source>
</reference>
<evidence type="ECO:0000255" key="1">
    <source>
        <dbReference type="HAMAP-Rule" id="MF_00113"/>
    </source>
</evidence>
<sequence length="341" mass="38466">MLVKEYSFTLPDELIARYPANQRDGSRLMVLDRQTAARSEIAFSQIVEWLRPDDLLVLNDTKVIPARLFGQKETGGRIELFLVEPVGDACWRCLLRSSKRCRTGQSIRLAEGVTAEVVEQLGEQDWLIRFHGSDDFESWLQRVGQMPIPPYLNRESEELDRVRYQTVYASESGAVAAPTAGLHFTQELLERIQEKGIRLARVTLHVGLGTFQPVRVERVQDHVIHRERYRLPSETAAAVTETRARGGRVIAVGTTACRTLEYAADNAGHLQAGQGEADIFIYPGYRFKVVDALLTNFHLPESTLLMLVSAFGGKEFILSAYEAAVNRQFRFYSYGDAMLIV</sequence>
<dbReference type="EC" id="2.4.99.17" evidence="1"/>
<dbReference type="EMBL" id="CP001089">
    <property type="protein sequence ID" value="ACD95728.1"/>
    <property type="molecule type" value="Genomic_DNA"/>
</dbReference>
<dbReference type="RefSeq" id="WP_012470067.1">
    <property type="nucleotide sequence ID" value="NC_010814.1"/>
</dbReference>
<dbReference type="SMR" id="B3E2S1"/>
<dbReference type="STRING" id="398767.Glov_2012"/>
<dbReference type="KEGG" id="glo:Glov_2012"/>
<dbReference type="eggNOG" id="COG0809">
    <property type="taxonomic scope" value="Bacteria"/>
</dbReference>
<dbReference type="HOGENOM" id="CLU_039110_1_0_7"/>
<dbReference type="OrthoDB" id="9805933at2"/>
<dbReference type="UniPathway" id="UPA00392"/>
<dbReference type="Proteomes" id="UP000002420">
    <property type="component" value="Chromosome"/>
</dbReference>
<dbReference type="GO" id="GO:0005737">
    <property type="term" value="C:cytoplasm"/>
    <property type="evidence" value="ECO:0007669"/>
    <property type="project" value="UniProtKB-SubCell"/>
</dbReference>
<dbReference type="GO" id="GO:0051075">
    <property type="term" value="F:S-adenosylmethionine:tRNA ribosyltransferase-isomerase activity"/>
    <property type="evidence" value="ECO:0007669"/>
    <property type="project" value="UniProtKB-EC"/>
</dbReference>
<dbReference type="GO" id="GO:0008616">
    <property type="term" value="P:queuosine biosynthetic process"/>
    <property type="evidence" value="ECO:0007669"/>
    <property type="project" value="UniProtKB-UniRule"/>
</dbReference>
<dbReference type="GO" id="GO:0002099">
    <property type="term" value="P:tRNA wobble guanine modification"/>
    <property type="evidence" value="ECO:0007669"/>
    <property type="project" value="TreeGrafter"/>
</dbReference>
<dbReference type="FunFam" id="2.40.10.240:FF:000002">
    <property type="entry name" value="S-adenosylmethionine:tRNA ribosyltransferase-isomerase"/>
    <property type="match status" value="1"/>
</dbReference>
<dbReference type="FunFam" id="3.40.1780.10:FF:000001">
    <property type="entry name" value="S-adenosylmethionine:tRNA ribosyltransferase-isomerase"/>
    <property type="match status" value="1"/>
</dbReference>
<dbReference type="Gene3D" id="2.40.10.240">
    <property type="entry name" value="QueA-like"/>
    <property type="match status" value="1"/>
</dbReference>
<dbReference type="Gene3D" id="3.40.1780.10">
    <property type="entry name" value="QueA-like"/>
    <property type="match status" value="1"/>
</dbReference>
<dbReference type="HAMAP" id="MF_00113">
    <property type="entry name" value="QueA"/>
    <property type="match status" value="1"/>
</dbReference>
<dbReference type="InterPro" id="IPR003699">
    <property type="entry name" value="QueA"/>
</dbReference>
<dbReference type="InterPro" id="IPR042118">
    <property type="entry name" value="QueA_dom1"/>
</dbReference>
<dbReference type="InterPro" id="IPR042119">
    <property type="entry name" value="QueA_dom2"/>
</dbReference>
<dbReference type="InterPro" id="IPR036100">
    <property type="entry name" value="QueA_sf"/>
</dbReference>
<dbReference type="NCBIfam" id="NF001140">
    <property type="entry name" value="PRK00147.1"/>
    <property type="match status" value="1"/>
</dbReference>
<dbReference type="NCBIfam" id="TIGR00113">
    <property type="entry name" value="queA"/>
    <property type="match status" value="1"/>
</dbReference>
<dbReference type="PANTHER" id="PTHR30307">
    <property type="entry name" value="S-ADENOSYLMETHIONINE:TRNA RIBOSYLTRANSFERASE-ISOMERASE"/>
    <property type="match status" value="1"/>
</dbReference>
<dbReference type="PANTHER" id="PTHR30307:SF0">
    <property type="entry name" value="S-ADENOSYLMETHIONINE:TRNA RIBOSYLTRANSFERASE-ISOMERASE"/>
    <property type="match status" value="1"/>
</dbReference>
<dbReference type="Pfam" id="PF02547">
    <property type="entry name" value="Queuosine_synth"/>
    <property type="match status" value="1"/>
</dbReference>
<dbReference type="SUPFAM" id="SSF111337">
    <property type="entry name" value="QueA-like"/>
    <property type="match status" value="1"/>
</dbReference>
<proteinExistence type="inferred from homology"/>
<gene>
    <name evidence="1" type="primary">queA</name>
    <name type="ordered locus">Glov_2012</name>
</gene>
<accession>B3E2S1</accession>
<comment type="function">
    <text evidence="1">Transfers and isomerizes the ribose moiety from AdoMet to the 7-aminomethyl group of 7-deazaguanine (preQ1-tRNA) to give epoxyqueuosine (oQ-tRNA).</text>
</comment>
<comment type="catalytic activity">
    <reaction evidence="1">
        <text>7-aminomethyl-7-carbaguanosine(34) in tRNA + S-adenosyl-L-methionine = epoxyqueuosine(34) in tRNA + adenine + L-methionine + 2 H(+)</text>
        <dbReference type="Rhea" id="RHEA:32155"/>
        <dbReference type="Rhea" id="RHEA-COMP:10342"/>
        <dbReference type="Rhea" id="RHEA-COMP:18582"/>
        <dbReference type="ChEBI" id="CHEBI:15378"/>
        <dbReference type="ChEBI" id="CHEBI:16708"/>
        <dbReference type="ChEBI" id="CHEBI:57844"/>
        <dbReference type="ChEBI" id="CHEBI:59789"/>
        <dbReference type="ChEBI" id="CHEBI:82833"/>
        <dbReference type="ChEBI" id="CHEBI:194443"/>
        <dbReference type="EC" id="2.4.99.17"/>
    </reaction>
</comment>
<comment type="pathway">
    <text evidence="1">tRNA modification; tRNA-queuosine biosynthesis.</text>
</comment>
<comment type="subunit">
    <text evidence="1">Monomer.</text>
</comment>
<comment type="subcellular location">
    <subcellularLocation>
        <location evidence="1">Cytoplasm</location>
    </subcellularLocation>
</comment>
<comment type="similarity">
    <text evidence="1">Belongs to the QueA family.</text>
</comment>
<keyword id="KW-0963">Cytoplasm</keyword>
<keyword id="KW-0671">Queuosine biosynthesis</keyword>
<keyword id="KW-1185">Reference proteome</keyword>
<keyword id="KW-0949">S-adenosyl-L-methionine</keyword>
<keyword id="KW-0808">Transferase</keyword>